<proteinExistence type="inferred from homology"/>
<protein>
    <recommendedName>
        <fullName evidence="1">Orotidine 5'-phosphate decarboxylase</fullName>
        <ecNumber evidence="1">4.1.1.23</ecNumber>
    </recommendedName>
    <alternativeName>
        <fullName evidence="1">OMP decarboxylase</fullName>
        <shortName evidence="1">OMPDCase</shortName>
        <shortName evidence="1">OMPdecase</shortName>
    </alternativeName>
</protein>
<feature type="chain" id="PRO_1000164749" description="Orotidine 5'-phosphate decarboxylase">
    <location>
        <begin position="1"/>
        <end position="276"/>
    </location>
</feature>
<feature type="active site" description="Proton donor" evidence="1">
    <location>
        <position position="93"/>
    </location>
</feature>
<accession>B9LP84</accession>
<organism>
    <name type="scientific">Halorubrum lacusprofundi (strain ATCC 49239 / DSM 5036 / JCM 8891 / ACAM 34)</name>
    <dbReference type="NCBI Taxonomy" id="416348"/>
    <lineage>
        <taxon>Archaea</taxon>
        <taxon>Methanobacteriati</taxon>
        <taxon>Methanobacteriota</taxon>
        <taxon>Stenosarchaea group</taxon>
        <taxon>Halobacteria</taxon>
        <taxon>Halobacteriales</taxon>
        <taxon>Haloferacaceae</taxon>
        <taxon>Halorubrum</taxon>
    </lineage>
</organism>
<name>PYRF_HALLT</name>
<keyword id="KW-0210">Decarboxylase</keyword>
<keyword id="KW-0456">Lyase</keyword>
<keyword id="KW-0665">Pyrimidine biosynthesis</keyword>
<keyword id="KW-1185">Reference proteome</keyword>
<dbReference type="EC" id="4.1.1.23" evidence="1"/>
<dbReference type="EMBL" id="CP001365">
    <property type="protein sequence ID" value="ACM57172.1"/>
    <property type="molecule type" value="Genomic_DNA"/>
</dbReference>
<dbReference type="RefSeq" id="WP_015910312.1">
    <property type="nucleotide sequence ID" value="NC_012029.1"/>
</dbReference>
<dbReference type="SMR" id="B9LP84"/>
<dbReference type="GeneID" id="7399534"/>
<dbReference type="KEGG" id="hla:Hlac_1586"/>
<dbReference type="eggNOG" id="arCOG00081">
    <property type="taxonomic scope" value="Archaea"/>
</dbReference>
<dbReference type="HOGENOM" id="CLU_060704_1_0_2"/>
<dbReference type="UniPathway" id="UPA00070">
    <property type="reaction ID" value="UER00120"/>
</dbReference>
<dbReference type="Proteomes" id="UP000000740">
    <property type="component" value="Chromosome 1"/>
</dbReference>
<dbReference type="GO" id="GO:0004590">
    <property type="term" value="F:orotidine-5'-phosphate decarboxylase activity"/>
    <property type="evidence" value="ECO:0007669"/>
    <property type="project" value="UniProtKB-UniRule"/>
</dbReference>
<dbReference type="GO" id="GO:0006207">
    <property type="term" value="P:'de novo' pyrimidine nucleobase biosynthetic process"/>
    <property type="evidence" value="ECO:0007669"/>
    <property type="project" value="InterPro"/>
</dbReference>
<dbReference type="GO" id="GO:0044205">
    <property type="term" value="P:'de novo' UMP biosynthetic process"/>
    <property type="evidence" value="ECO:0007669"/>
    <property type="project" value="UniProtKB-UniRule"/>
</dbReference>
<dbReference type="CDD" id="cd04725">
    <property type="entry name" value="OMP_decarboxylase_like"/>
    <property type="match status" value="1"/>
</dbReference>
<dbReference type="Gene3D" id="3.20.20.70">
    <property type="entry name" value="Aldolase class I"/>
    <property type="match status" value="1"/>
</dbReference>
<dbReference type="HAMAP" id="MF_01215">
    <property type="entry name" value="OMPdecase_type2"/>
    <property type="match status" value="1"/>
</dbReference>
<dbReference type="InterPro" id="IPR013785">
    <property type="entry name" value="Aldolase_TIM"/>
</dbReference>
<dbReference type="InterPro" id="IPR018089">
    <property type="entry name" value="OMPdecase_AS"/>
</dbReference>
<dbReference type="InterPro" id="IPR011995">
    <property type="entry name" value="OMPdecase_type-2"/>
</dbReference>
<dbReference type="InterPro" id="IPR001754">
    <property type="entry name" value="OMPdeCOase_dom"/>
</dbReference>
<dbReference type="InterPro" id="IPR011060">
    <property type="entry name" value="RibuloseP-bd_barrel"/>
</dbReference>
<dbReference type="NCBIfam" id="TIGR02127">
    <property type="entry name" value="pyrF_sub2"/>
    <property type="match status" value="1"/>
</dbReference>
<dbReference type="PANTHER" id="PTHR43375">
    <property type="entry name" value="OROTIDINE 5'-PHOSPHATE DECARBOXYLASE"/>
    <property type="match status" value="1"/>
</dbReference>
<dbReference type="PANTHER" id="PTHR43375:SF1">
    <property type="entry name" value="OROTIDINE 5'-PHOSPHATE DECARBOXYLASE"/>
    <property type="match status" value="1"/>
</dbReference>
<dbReference type="Pfam" id="PF00215">
    <property type="entry name" value="OMPdecase"/>
    <property type="match status" value="1"/>
</dbReference>
<dbReference type="SMART" id="SM00934">
    <property type="entry name" value="OMPdecase"/>
    <property type="match status" value="1"/>
</dbReference>
<dbReference type="SUPFAM" id="SSF51366">
    <property type="entry name" value="Ribulose-phoshate binding barrel"/>
    <property type="match status" value="1"/>
</dbReference>
<dbReference type="PROSITE" id="PS00156">
    <property type="entry name" value="OMPDECASE"/>
    <property type="match status" value="1"/>
</dbReference>
<sequence>MSFFETLADRIEATDSVVSVGLDPDPNRLPEFLANADLPRWAFNRRIIDATHEHAACYKPNAAFYEDADGWRALEETIAYAHGKDVPVLLDAKRADIGNTTRQYAAALDRADAITVNPYLGRDSLQPFLDREEKGVFVLCRTSNPGGSDLQDLELASGEPLYERVAALADVWNGNDNVGLVVGATAPEELAEVREIVPEIPFLVPGVGAQGGDAEAAVEHGLADRPDAAVDVGLVNSSRGIIFAGEESSRPDDEATYFGAAGDAAKRLKKRLNQYR</sequence>
<reference key="1">
    <citation type="journal article" date="2016" name="Stand. Genomic Sci.">
        <title>Complete genome sequence of the Antarctic Halorubrum lacusprofundi type strain ACAM 34.</title>
        <authorList>
            <person name="Anderson I.J."/>
            <person name="DasSarma P."/>
            <person name="Lucas S."/>
            <person name="Copeland A."/>
            <person name="Lapidus A."/>
            <person name="Del Rio T.G."/>
            <person name="Tice H."/>
            <person name="Dalin E."/>
            <person name="Bruce D.C."/>
            <person name="Goodwin L."/>
            <person name="Pitluck S."/>
            <person name="Sims D."/>
            <person name="Brettin T.S."/>
            <person name="Detter J.C."/>
            <person name="Han C.S."/>
            <person name="Larimer F."/>
            <person name="Hauser L."/>
            <person name="Land M."/>
            <person name="Ivanova N."/>
            <person name="Richardson P."/>
            <person name="Cavicchioli R."/>
            <person name="DasSarma S."/>
            <person name="Woese C.R."/>
            <person name="Kyrpides N.C."/>
        </authorList>
    </citation>
    <scope>NUCLEOTIDE SEQUENCE [LARGE SCALE GENOMIC DNA]</scope>
    <source>
        <strain>ATCC 49239 / DSM 5036 / JCM 8891 / ACAM 34</strain>
    </source>
</reference>
<comment type="catalytic activity">
    <reaction evidence="1">
        <text>orotidine 5'-phosphate + H(+) = UMP + CO2</text>
        <dbReference type="Rhea" id="RHEA:11596"/>
        <dbReference type="ChEBI" id="CHEBI:15378"/>
        <dbReference type="ChEBI" id="CHEBI:16526"/>
        <dbReference type="ChEBI" id="CHEBI:57538"/>
        <dbReference type="ChEBI" id="CHEBI:57865"/>
        <dbReference type="EC" id="4.1.1.23"/>
    </reaction>
</comment>
<comment type="pathway">
    <text evidence="1">Pyrimidine metabolism; UMP biosynthesis via de novo pathway; UMP from orotate: step 2/2.</text>
</comment>
<comment type="similarity">
    <text evidence="1">Belongs to the OMP decarboxylase family. Type 2 subfamily.</text>
</comment>
<evidence type="ECO:0000255" key="1">
    <source>
        <dbReference type="HAMAP-Rule" id="MF_01215"/>
    </source>
</evidence>
<gene>
    <name evidence="1" type="primary">pyrF</name>
    <name type="ordered locus">Hlac_1586</name>
</gene>